<comment type="catalytic activity">
    <reaction evidence="1">
        <text>L-citrulline + L-aspartate + ATP = 2-(N(omega)-L-arginino)succinate + AMP + diphosphate + H(+)</text>
        <dbReference type="Rhea" id="RHEA:10932"/>
        <dbReference type="ChEBI" id="CHEBI:15378"/>
        <dbReference type="ChEBI" id="CHEBI:29991"/>
        <dbReference type="ChEBI" id="CHEBI:30616"/>
        <dbReference type="ChEBI" id="CHEBI:33019"/>
        <dbReference type="ChEBI" id="CHEBI:57472"/>
        <dbReference type="ChEBI" id="CHEBI:57743"/>
        <dbReference type="ChEBI" id="CHEBI:456215"/>
        <dbReference type="EC" id="6.3.4.5"/>
    </reaction>
</comment>
<comment type="pathway">
    <text evidence="1">Amino-acid biosynthesis; L-arginine biosynthesis; L-arginine from L-ornithine and carbamoyl phosphate: step 2/3.</text>
</comment>
<comment type="subunit">
    <text evidence="1">Homotetramer.</text>
</comment>
<comment type="subcellular location">
    <subcellularLocation>
        <location evidence="1">Cytoplasm</location>
    </subcellularLocation>
</comment>
<comment type="similarity">
    <text evidence="1">Belongs to the argininosuccinate synthase family. Type 1 subfamily.</text>
</comment>
<keyword id="KW-0028">Amino-acid biosynthesis</keyword>
<keyword id="KW-0055">Arginine biosynthesis</keyword>
<keyword id="KW-0067">ATP-binding</keyword>
<keyword id="KW-0963">Cytoplasm</keyword>
<keyword id="KW-0436">Ligase</keyword>
<keyword id="KW-0547">Nucleotide-binding</keyword>
<organism>
    <name type="scientific">Bacillus cereus (strain Q1)</name>
    <dbReference type="NCBI Taxonomy" id="361100"/>
    <lineage>
        <taxon>Bacteria</taxon>
        <taxon>Bacillati</taxon>
        <taxon>Bacillota</taxon>
        <taxon>Bacilli</taxon>
        <taxon>Bacillales</taxon>
        <taxon>Bacillaceae</taxon>
        <taxon>Bacillus</taxon>
        <taxon>Bacillus cereus group</taxon>
    </lineage>
</organism>
<dbReference type="EC" id="6.3.4.5" evidence="1"/>
<dbReference type="EMBL" id="CP000227">
    <property type="protein sequence ID" value="ACM14871.1"/>
    <property type="molecule type" value="Genomic_DNA"/>
</dbReference>
<dbReference type="SMR" id="B9J0E1"/>
<dbReference type="KEGG" id="bcq:BCQ_4445"/>
<dbReference type="HOGENOM" id="CLU_032784_4_2_9"/>
<dbReference type="UniPathway" id="UPA00068">
    <property type="reaction ID" value="UER00113"/>
</dbReference>
<dbReference type="Proteomes" id="UP000000441">
    <property type="component" value="Chromosome"/>
</dbReference>
<dbReference type="GO" id="GO:0005737">
    <property type="term" value="C:cytoplasm"/>
    <property type="evidence" value="ECO:0007669"/>
    <property type="project" value="UniProtKB-SubCell"/>
</dbReference>
<dbReference type="GO" id="GO:0004055">
    <property type="term" value="F:argininosuccinate synthase activity"/>
    <property type="evidence" value="ECO:0007669"/>
    <property type="project" value="UniProtKB-UniRule"/>
</dbReference>
<dbReference type="GO" id="GO:0005524">
    <property type="term" value="F:ATP binding"/>
    <property type="evidence" value="ECO:0007669"/>
    <property type="project" value="UniProtKB-UniRule"/>
</dbReference>
<dbReference type="GO" id="GO:0000053">
    <property type="term" value="P:argininosuccinate metabolic process"/>
    <property type="evidence" value="ECO:0007669"/>
    <property type="project" value="TreeGrafter"/>
</dbReference>
<dbReference type="GO" id="GO:0006526">
    <property type="term" value="P:L-arginine biosynthetic process"/>
    <property type="evidence" value="ECO:0007669"/>
    <property type="project" value="UniProtKB-UniRule"/>
</dbReference>
<dbReference type="GO" id="GO:0000050">
    <property type="term" value="P:urea cycle"/>
    <property type="evidence" value="ECO:0007669"/>
    <property type="project" value="TreeGrafter"/>
</dbReference>
<dbReference type="CDD" id="cd01999">
    <property type="entry name" value="ASS"/>
    <property type="match status" value="1"/>
</dbReference>
<dbReference type="FunFam" id="1.20.5.470:FF:000002">
    <property type="entry name" value="Argininosuccinate synthase"/>
    <property type="match status" value="1"/>
</dbReference>
<dbReference type="FunFam" id="3.40.50.620:FF:000038">
    <property type="entry name" value="Argininosuccinate synthase"/>
    <property type="match status" value="1"/>
</dbReference>
<dbReference type="FunFam" id="3.90.1260.10:FF:000007">
    <property type="entry name" value="Argininosuccinate synthase"/>
    <property type="match status" value="1"/>
</dbReference>
<dbReference type="Gene3D" id="3.90.1260.10">
    <property type="entry name" value="Argininosuccinate synthetase, chain A, domain 2"/>
    <property type="match status" value="1"/>
</dbReference>
<dbReference type="Gene3D" id="3.40.50.620">
    <property type="entry name" value="HUPs"/>
    <property type="match status" value="1"/>
</dbReference>
<dbReference type="Gene3D" id="1.20.5.470">
    <property type="entry name" value="Single helix bin"/>
    <property type="match status" value="1"/>
</dbReference>
<dbReference type="HAMAP" id="MF_00005">
    <property type="entry name" value="Arg_succ_synth_type1"/>
    <property type="match status" value="1"/>
</dbReference>
<dbReference type="InterPro" id="IPR048268">
    <property type="entry name" value="Arginosuc_syn_C"/>
</dbReference>
<dbReference type="InterPro" id="IPR048267">
    <property type="entry name" value="Arginosuc_syn_N"/>
</dbReference>
<dbReference type="InterPro" id="IPR001518">
    <property type="entry name" value="Arginosuc_synth"/>
</dbReference>
<dbReference type="InterPro" id="IPR018223">
    <property type="entry name" value="Arginosuc_synth_CS"/>
</dbReference>
<dbReference type="InterPro" id="IPR023434">
    <property type="entry name" value="Arginosuc_synth_type_1_subfam"/>
</dbReference>
<dbReference type="InterPro" id="IPR024074">
    <property type="entry name" value="AS_cat/multimer_dom_body"/>
</dbReference>
<dbReference type="InterPro" id="IPR014729">
    <property type="entry name" value="Rossmann-like_a/b/a_fold"/>
</dbReference>
<dbReference type="NCBIfam" id="TIGR00032">
    <property type="entry name" value="argG"/>
    <property type="match status" value="1"/>
</dbReference>
<dbReference type="NCBIfam" id="NF001770">
    <property type="entry name" value="PRK00509.1"/>
    <property type="match status" value="1"/>
</dbReference>
<dbReference type="PANTHER" id="PTHR11587">
    <property type="entry name" value="ARGININOSUCCINATE SYNTHASE"/>
    <property type="match status" value="1"/>
</dbReference>
<dbReference type="PANTHER" id="PTHR11587:SF2">
    <property type="entry name" value="ARGININOSUCCINATE SYNTHASE"/>
    <property type="match status" value="1"/>
</dbReference>
<dbReference type="Pfam" id="PF20979">
    <property type="entry name" value="Arginosuc_syn_C"/>
    <property type="match status" value="1"/>
</dbReference>
<dbReference type="Pfam" id="PF00764">
    <property type="entry name" value="Arginosuc_synth"/>
    <property type="match status" value="1"/>
</dbReference>
<dbReference type="SUPFAM" id="SSF52402">
    <property type="entry name" value="Adenine nucleotide alpha hydrolases-like"/>
    <property type="match status" value="1"/>
</dbReference>
<dbReference type="SUPFAM" id="SSF69864">
    <property type="entry name" value="Argininosuccinate synthetase, C-terminal domain"/>
    <property type="match status" value="1"/>
</dbReference>
<dbReference type="PROSITE" id="PS00564">
    <property type="entry name" value="ARGININOSUCCIN_SYN_1"/>
    <property type="match status" value="1"/>
</dbReference>
<dbReference type="PROSITE" id="PS00565">
    <property type="entry name" value="ARGININOSUCCIN_SYN_2"/>
    <property type="match status" value="1"/>
</dbReference>
<gene>
    <name evidence="1" type="primary">argG</name>
    <name type="ordered locus">BCQ_4445</name>
</gene>
<sequence>MEKKKVVLAYSGGLDTSVAIKWLQEKNYDIIALCLDLGEGKDLAFVKEKALSVGAIKSYMIDVQEEFANEYALMAMQAHTLYEGKYPLVSALSRPLIAKKLVEIAEQEGATAVAHGCTGKGNDQVRFEVSIQALNPYLEVIAPVREWKWSREEEIAYAKENDVPIPINLDSPFSIDQNLWGRSNECGILEDPWAAPPEDAYEMTLALEDTPNKPEFVEIGFEAGVPTTLNGTAYPLSELIKTLNALAGKHGVGRIDHVENRLVGIKSREVYECPAAMTLITAHKELEDLTLVKEVAHFKPMIEQKITELIYNGLWFSPLKQALHAFLQETQKNVTGMVRVKLFKGHAIVEGRKSEYSLYDEKLATYTAQDEFNHDAAVGFISLFGLPTKVYSQVNQKKVEA</sequence>
<name>ASSY_BACCQ</name>
<evidence type="ECO:0000255" key="1">
    <source>
        <dbReference type="HAMAP-Rule" id="MF_00005"/>
    </source>
</evidence>
<protein>
    <recommendedName>
        <fullName evidence="1">Argininosuccinate synthase</fullName>
        <ecNumber evidence="1">6.3.4.5</ecNumber>
    </recommendedName>
    <alternativeName>
        <fullName evidence="1">Citrulline--aspartate ligase</fullName>
    </alternativeName>
</protein>
<reference key="1">
    <citation type="journal article" date="2009" name="J. Bacteriol.">
        <title>Complete genome sequence of the extremophilic Bacillus cereus strain Q1 with industrial applications.</title>
        <authorList>
            <person name="Xiong Z."/>
            <person name="Jiang Y."/>
            <person name="Qi D."/>
            <person name="Lu H."/>
            <person name="Yang F."/>
            <person name="Yang J."/>
            <person name="Chen L."/>
            <person name="Sun L."/>
            <person name="Xu X."/>
            <person name="Xue Y."/>
            <person name="Zhu Y."/>
            <person name="Jin Q."/>
        </authorList>
    </citation>
    <scope>NUCLEOTIDE SEQUENCE [LARGE SCALE GENOMIC DNA]</scope>
    <source>
        <strain>Q1</strain>
    </source>
</reference>
<accession>B9J0E1</accession>
<proteinExistence type="inferred from homology"/>
<feature type="chain" id="PRO_1000191880" description="Argininosuccinate synthase">
    <location>
        <begin position="1"/>
        <end position="401"/>
    </location>
</feature>
<feature type="binding site" evidence="1">
    <location>
        <begin position="9"/>
        <end position="17"/>
    </location>
    <ligand>
        <name>ATP</name>
        <dbReference type="ChEBI" id="CHEBI:30616"/>
    </ligand>
</feature>
<feature type="binding site" evidence="1">
    <location>
        <position position="86"/>
    </location>
    <ligand>
        <name>L-citrulline</name>
        <dbReference type="ChEBI" id="CHEBI:57743"/>
    </ligand>
</feature>
<feature type="binding site" evidence="1">
    <location>
        <position position="116"/>
    </location>
    <ligand>
        <name>ATP</name>
        <dbReference type="ChEBI" id="CHEBI:30616"/>
    </ligand>
</feature>
<feature type="binding site" evidence="1">
    <location>
        <position position="118"/>
    </location>
    <ligand>
        <name>L-aspartate</name>
        <dbReference type="ChEBI" id="CHEBI:29991"/>
    </ligand>
</feature>
<feature type="binding site" evidence="1">
    <location>
        <position position="122"/>
    </location>
    <ligand>
        <name>L-aspartate</name>
        <dbReference type="ChEBI" id="CHEBI:29991"/>
    </ligand>
</feature>
<feature type="binding site" evidence="1">
    <location>
        <position position="122"/>
    </location>
    <ligand>
        <name>L-citrulline</name>
        <dbReference type="ChEBI" id="CHEBI:57743"/>
    </ligand>
</feature>
<feature type="binding site" evidence="1">
    <location>
        <position position="123"/>
    </location>
    <ligand>
        <name>L-aspartate</name>
        <dbReference type="ChEBI" id="CHEBI:29991"/>
    </ligand>
</feature>
<feature type="binding site" evidence="1">
    <location>
        <position position="126"/>
    </location>
    <ligand>
        <name>L-citrulline</name>
        <dbReference type="ChEBI" id="CHEBI:57743"/>
    </ligand>
</feature>
<feature type="binding site" evidence="1">
    <location>
        <position position="174"/>
    </location>
    <ligand>
        <name>L-citrulline</name>
        <dbReference type="ChEBI" id="CHEBI:57743"/>
    </ligand>
</feature>
<feature type="binding site" evidence="1">
    <location>
        <position position="183"/>
    </location>
    <ligand>
        <name>L-citrulline</name>
        <dbReference type="ChEBI" id="CHEBI:57743"/>
    </ligand>
</feature>
<feature type="binding site" evidence="1">
    <location>
        <position position="259"/>
    </location>
    <ligand>
        <name>L-citrulline</name>
        <dbReference type="ChEBI" id="CHEBI:57743"/>
    </ligand>
</feature>
<feature type="binding site" evidence="1">
    <location>
        <position position="271"/>
    </location>
    <ligand>
        <name>L-citrulline</name>
        <dbReference type="ChEBI" id="CHEBI:57743"/>
    </ligand>
</feature>